<organism>
    <name type="scientific">Ralstonia nicotianae (strain ATCC BAA-1114 / GMI1000)</name>
    <name type="common">Ralstonia solanacearum</name>
    <dbReference type="NCBI Taxonomy" id="267608"/>
    <lineage>
        <taxon>Bacteria</taxon>
        <taxon>Pseudomonadati</taxon>
        <taxon>Pseudomonadota</taxon>
        <taxon>Betaproteobacteria</taxon>
        <taxon>Burkholderiales</taxon>
        <taxon>Burkholderiaceae</taxon>
        <taxon>Ralstonia</taxon>
        <taxon>Ralstonia solanacearum species complex</taxon>
    </lineage>
</organism>
<name>OTC_RALN1</name>
<feature type="chain" id="PRO_0000112995" description="Ornithine carbamoyltransferase">
    <location>
        <begin position="1"/>
        <end position="308"/>
    </location>
</feature>
<feature type="binding site" evidence="2">
    <location>
        <begin position="57"/>
        <end position="60"/>
    </location>
    <ligand>
        <name>carbamoyl phosphate</name>
        <dbReference type="ChEBI" id="CHEBI:58228"/>
    </ligand>
</feature>
<feature type="binding site" evidence="2">
    <location>
        <position position="84"/>
    </location>
    <ligand>
        <name>carbamoyl phosphate</name>
        <dbReference type="ChEBI" id="CHEBI:58228"/>
    </ligand>
</feature>
<feature type="binding site" evidence="2">
    <location>
        <position position="108"/>
    </location>
    <ligand>
        <name>carbamoyl phosphate</name>
        <dbReference type="ChEBI" id="CHEBI:58228"/>
    </ligand>
</feature>
<feature type="binding site" evidence="2">
    <location>
        <begin position="135"/>
        <end position="138"/>
    </location>
    <ligand>
        <name>carbamoyl phosphate</name>
        <dbReference type="ChEBI" id="CHEBI:58228"/>
    </ligand>
</feature>
<feature type="binding site" evidence="2">
    <location>
        <position position="166"/>
    </location>
    <ligand>
        <name>L-ornithine</name>
        <dbReference type="ChEBI" id="CHEBI:46911"/>
    </ligand>
</feature>
<feature type="binding site" evidence="2">
    <location>
        <position position="224"/>
    </location>
    <ligand>
        <name>L-ornithine</name>
        <dbReference type="ChEBI" id="CHEBI:46911"/>
    </ligand>
</feature>
<feature type="binding site" evidence="2">
    <location>
        <begin position="228"/>
        <end position="229"/>
    </location>
    <ligand>
        <name>L-ornithine</name>
        <dbReference type="ChEBI" id="CHEBI:46911"/>
    </ligand>
</feature>
<feature type="binding site" evidence="2">
    <location>
        <begin position="264"/>
        <end position="265"/>
    </location>
    <ligand>
        <name>carbamoyl phosphate</name>
        <dbReference type="ChEBI" id="CHEBI:58228"/>
    </ligand>
</feature>
<feature type="binding site" evidence="2">
    <location>
        <position position="292"/>
    </location>
    <ligand>
        <name>carbamoyl phosphate</name>
        <dbReference type="ChEBI" id="CHEBI:58228"/>
    </ligand>
</feature>
<proteinExistence type="inferred from homology"/>
<evidence type="ECO:0000250" key="1"/>
<evidence type="ECO:0000255" key="2">
    <source>
        <dbReference type="HAMAP-Rule" id="MF_01109"/>
    </source>
</evidence>
<gene>
    <name evidence="2" type="primary">argF</name>
    <name type="ordered locus">RSc2554</name>
    <name type="ORF">RS00733</name>
</gene>
<sequence>MNPPSKIKHYLQFKDFSLEEYAYLLDRSRILKAKFKNYETWHPLHDRTLAMIFEKNSTRTRLSFEAGIHQLGGHAVFLNTRDSQLGRGEPIEDAAQVISRMTDIIMIRTFGQEIIERFATHSRVPVINGLTNEYHPCQVLADIFTFIEHRGPIQGKTVTWVGDANNMAYTWIQAAEILGFRFHFSAPKGYQLDPVMVADSSRPFVHVFENPLEACEGAHLVTTDVWTSMGYEAENEARKKAFGDWMVTEAMMQRAQPDALFMHCLPAHRGEEVEAAVIDGKQSVVWDEAENRLHVQKALMEYLLCGRY</sequence>
<comment type="function">
    <text evidence="1">Reversibly catalyzes the transfer of the carbamoyl group from carbamoyl phosphate (CP) to the N(epsilon) atom of ornithine (ORN) to produce L-citrulline.</text>
</comment>
<comment type="catalytic activity">
    <reaction evidence="2">
        <text>carbamoyl phosphate + L-ornithine = L-citrulline + phosphate + H(+)</text>
        <dbReference type="Rhea" id="RHEA:19513"/>
        <dbReference type="ChEBI" id="CHEBI:15378"/>
        <dbReference type="ChEBI" id="CHEBI:43474"/>
        <dbReference type="ChEBI" id="CHEBI:46911"/>
        <dbReference type="ChEBI" id="CHEBI:57743"/>
        <dbReference type="ChEBI" id="CHEBI:58228"/>
        <dbReference type="EC" id="2.1.3.3"/>
    </reaction>
</comment>
<comment type="pathway">
    <text evidence="2">Amino-acid biosynthesis; L-arginine biosynthesis; L-arginine from L-ornithine and carbamoyl phosphate: step 1/3.</text>
</comment>
<comment type="subcellular location">
    <subcellularLocation>
        <location evidence="2">Cytoplasm</location>
    </subcellularLocation>
</comment>
<comment type="similarity">
    <text evidence="2">Belongs to the aspartate/ornithine carbamoyltransferase superfamily. OTCase family.</text>
</comment>
<keyword id="KW-0028">Amino-acid biosynthesis</keyword>
<keyword id="KW-0055">Arginine biosynthesis</keyword>
<keyword id="KW-0963">Cytoplasm</keyword>
<keyword id="KW-1185">Reference proteome</keyword>
<keyword id="KW-0808">Transferase</keyword>
<dbReference type="EC" id="2.1.3.3" evidence="2"/>
<dbReference type="EMBL" id="AL646052">
    <property type="protein sequence ID" value="CAD16261.1"/>
    <property type="molecule type" value="Genomic_DNA"/>
</dbReference>
<dbReference type="RefSeq" id="WP_011002469.1">
    <property type="nucleotide sequence ID" value="NC_003295.1"/>
</dbReference>
<dbReference type="SMR" id="Q8XWC0"/>
<dbReference type="STRING" id="267608.RSc2554"/>
<dbReference type="EnsemblBacteria" id="CAD16261">
    <property type="protein sequence ID" value="CAD16261"/>
    <property type="gene ID" value="RSc2554"/>
</dbReference>
<dbReference type="KEGG" id="rso:RSc2554"/>
<dbReference type="PATRIC" id="fig|267608.8.peg.2597"/>
<dbReference type="eggNOG" id="COG0078">
    <property type="taxonomic scope" value="Bacteria"/>
</dbReference>
<dbReference type="HOGENOM" id="CLU_043846_3_2_4"/>
<dbReference type="UniPathway" id="UPA00068">
    <property type="reaction ID" value="UER00112"/>
</dbReference>
<dbReference type="Proteomes" id="UP000001436">
    <property type="component" value="Chromosome"/>
</dbReference>
<dbReference type="GO" id="GO:0005737">
    <property type="term" value="C:cytoplasm"/>
    <property type="evidence" value="ECO:0007669"/>
    <property type="project" value="UniProtKB-SubCell"/>
</dbReference>
<dbReference type="GO" id="GO:0016597">
    <property type="term" value="F:amino acid binding"/>
    <property type="evidence" value="ECO:0007669"/>
    <property type="project" value="InterPro"/>
</dbReference>
<dbReference type="GO" id="GO:0004585">
    <property type="term" value="F:ornithine carbamoyltransferase activity"/>
    <property type="evidence" value="ECO:0007669"/>
    <property type="project" value="UniProtKB-UniRule"/>
</dbReference>
<dbReference type="GO" id="GO:0042450">
    <property type="term" value="P:arginine biosynthetic process via ornithine"/>
    <property type="evidence" value="ECO:0007669"/>
    <property type="project" value="TreeGrafter"/>
</dbReference>
<dbReference type="GO" id="GO:0019240">
    <property type="term" value="P:citrulline biosynthetic process"/>
    <property type="evidence" value="ECO:0007669"/>
    <property type="project" value="TreeGrafter"/>
</dbReference>
<dbReference type="GO" id="GO:0006526">
    <property type="term" value="P:L-arginine biosynthetic process"/>
    <property type="evidence" value="ECO:0007669"/>
    <property type="project" value="UniProtKB-UniRule"/>
</dbReference>
<dbReference type="FunFam" id="3.40.50.1370:FF:000008">
    <property type="entry name" value="Ornithine carbamoyltransferase"/>
    <property type="match status" value="1"/>
</dbReference>
<dbReference type="Gene3D" id="3.40.50.1370">
    <property type="entry name" value="Aspartate/ornithine carbamoyltransferase"/>
    <property type="match status" value="2"/>
</dbReference>
<dbReference type="HAMAP" id="MF_01109">
    <property type="entry name" value="OTCase"/>
    <property type="match status" value="1"/>
</dbReference>
<dbReference type="InterPro" id="IPR006132">
    <property type="entry name" value="Asp/Orn_carbamoyltranf_P-bd"/>
</dbReference>
<dbReference type="InterPro" id="IPR006130">
    <property type="entry name" value="Asp/Orn_carbamoylTrfase"/>
</dbReference>
<dbReference type="InterPro" id="IPR036901">
    <property type="entry name" value="Asp/Orn_carbamoylTrfase_sf"/>
</dbReference>
<dbReference type="InterPro" id="IPR006131">
    <property type="entry name" value="Asp_carbamoyltransf_Asp/Orn-bd"/>
</dbReference>
<dbReference type="InterPro" id="IPR002292">
    <property type="entry name" value="Orn/put_carbamltrans"/>
</dbReference>
<dbReference type="InterPro" id="IPR024904">
    <property type="entry name" value="OTCase_ArgI"/>
</dbReference>
<dbReference type="NCBIfam" id="TIGR00658">
    <property type="entry name" value="orni_carb_tr"/>
    <property type="match status" value="1"/>
</dbReference>
<dbReference type="NCBIfam" id="NF001986">
    <property type="entry name" value="PRK00779.1"/>
    <property type="match status" value="1"/>
</dbReference>
<dbReference type="PANTHER" id="PTHR45753">
    <property type="entry name" value="ORNITHINE CARBAMOYLTRANSFERASE, MITOCHONDRIAL"/>
    <property type="match status" value="1"/>
</dbReference>
<dbReference type="PANTHER" id="PTHR45753:SF3">
    <property type="entry name" value="ORNITHINE TRANSCARBAMYLASE, MITOCHONDRIAL"/>
    <property type="match status" value="1"/>
</dbReference>
<dbReference type="Pfam" id="PF00185">
    <property type="entry name" value="OTCace"/>
    <property type="match status" value="1"/>
</dbReference>
<dbReference type="Pfam" id="PF02729">
    <property type="entry name" value="OTCace_N"/>
    <property type="match status" value="1"/>
</dbReference>
<dbReference type="PRINTS" id="PR00100">
    <property type="entry name" value="AOTCASE"/>
</dbReference>
<dbReference type="PRINTS" id="PR00102">
    <property type="entry name" value="OTCASE"/>
</dbReference>
<dbReference type="SUPFAM" id="SSF53671">
    <property type="entry name" value="Aspartate/ornithine carbamoyltransferase"/>
    <property type="match status" value="1"/>
</dbReference>
<dbReference type="PROSITE" id="PS00097">
    <property type="entry name" value="CARBAMOYLTRANSFERASE"/>
    <property type="match status" value="1"/>
</dbReference>
<reference key="1">
    <citation type="journal article" date="2002" name="Nature">
        <title>Genome sequence of the plant pathogen Ralstonia solanacearum.</title>
        <authorList>
            <person name="Salanoubat M."/>
            <person name="Genin S."/>
            <person name="Artiguenave F."/>
            <person name="Gouzy J."/>
            <person name="Mangenot S."/>
            <person name="Arlat M."/>
            <person name="Billault A."/>
            <person name="Brottier P."/>
            <person name="Camus J.-C."/>
            <person name="Cattolico L."/>
            <person name="Chandler M."/>
            <person name="Choisne N."/>
            <person name="Claudel-Renard C."/>
            <person name="Cunnac S."/>
            <person name="Demange N."/>
            <person name="Gaspin C."/>
            <person name="Lavie M."/>
            <person name="Moisan A."/>
            <person name="Robert C."/>
            <person name="Saurin W."/>
            <person name="Schiex T."/>
            <person name="Siguier P."/>
            <person name="Thebault P."/>
            <person name="Whalen M."/>
            <person name="Wincker P."/>
            <person name="Levy M."/>
            <person name="Weissenbach J."/>
            <person name="Boucher C.A."/>
        </authorList>
    </citation>
    <scope>NUCLEOTIDE SEQUENCE [LARGE SCALE GENOMIC DNA]</scope>
    <source>
        <strain>ATCC BAA-1114 / GMI1000</strain>
    </source>
</reference>
<accession>Q8XWC0</accession>
<protein>
    <recommendedName>
        <fullName evidence="2">Ornithine carbamoyltransferase</fullName>
        <shortName evidence="2">OTCase</shortName>
        <ecNumber evidence="2">2.1.3.3</ecNumber>
    </recommendedName>
</protein>